<name>GLB1L_MACFA</name>
<accession>Q95LV1</accession>
<accession>Q4R748</accession>
<accession>Q95LY1</accession>
<comment type="function">
    <text evidence="2">Probable glycosyl hydrolase.</text>
</comment>
<comment type="subcellular location">
    <subcellularLocation>
        <location evidence="2">Secreted</location>
    </subcellularLocation>
</comment>
<comment type="similarity">
    <text evidence="2">Belongs to the glycosyl hydrolase 35 family.</text>
</comment>
<comment type="sequence caution" evidence="2">
    <conflict type="erroneous initiation">
        <sequence resource="EMBL-CDS" id="BAE01075"/>
    </conflict>
</comment>
<sequence>MAPKKPSCLRSLLLPLSLTLLLPQADTRSFIVDRDHDRFLLDGAPFRYVSGSLHYFRVPRVLWADRLLKMRWSGLNAIQFYVPWNYHEPQPGVYNFNGSRDLIAFLNEAALANLLVILRPGPYICAEWEMGGLPSWLLRKPEIRLRTSDPDFLAAVDSWFKVLLPKIYPWLYHNGGNIISIQVENEYGSYGACDFSYMRHLAGLFRALLGEKILLFTTDGPEGLKCGSLQGLYTTVDFGPADNMTKIFTLLRKYEPHGPLVNSEYYTGWLDYWGQNHSTRSVSAVTKGLENMLKLGASVNMYMFHGGTNFGYWNGADKKGRFLSITTSYDYDAPISEAGDPTPKLFALRDVISKFQEVPLGPLPPPSPKMMVGPLTLHLVGHLLAFLDLLCPSGPIRSILPMTFEAVKQDRGFMLYRTYMTHTIFEPTPFWVPNNGVHDRAYVMVDGVFQGVLERNMRDKLFLMGKVGSKLDILVENMGRLSFGSNSSDFKGLLEPPILGQTILTQWMMFPLKIDNLVKWWFLLQLPKWPYPQAPSGPTFYSKTFPILGSVGDTFLHLPGWTKGQVWINGFNLGRYWTKRGPQQTLYVPRFLLFPRGALNKITLLELENVPLQPQVQFLDKPILNSTSTLHRTHINSLSADTLSASEPMELSGH</sequence>
<keyword id="KW-0325">Glycoprotein</keyword>
<keyword id="KW-0326">Glycosidase</keyword>
<keyword id="KW-0378">Hydrolase</keyword>
<keyword id="KW-1185">Reference proteome</keyword>
<keyword id="KW-0964">Secreted</keyword>
<keyword id="KW-0732">Signal</keyword>
<proteinExistence type="evidence at transcript level"/>
<protein>
    <recommendedName>
        <fullName>Beta-galactosidase-1-like protein</fullName>
        <ecNumber>3.2.1.-</ecNumber>
    </recommendedName>
</protein>
<organism>
    <name type="scientific">Macaca fascicularis</name>
    <name type="common">Crab-eating macaque</name>
    <name type="synonym">Cynomolgus monkey</name>
    <dbReference type="NCBI Taxonomy" id="9541"/>
    <lineage>
        <taxon>Eukaryota</taxon>
        <taxon>Metazoa</taxon>
        <taxon>Chordata</taxon>
        <taxon>Craniata</taxon>
        <taxon>Vertebrata</taxon>
        <taxon>Euteleostomi</taxon>
        <taxon>Mammalia</taxon>
        <taxon>Eutheria</taxon>
        <taxon>Euarchontoglires</taxon>
        <taxon>Primates</taxon>
        <taxon>Haplorrhini</taxon>
        <taxon>Catarrhini</taxon>
        <taxon>Cercopithecidae</taxon>
        <taxon>Cercopithecinae</taxon>
        <taxon>Macaca</taxon>
    </lineage>
</organism>
<feature type="signal peptide" evidence="1">
    <location>
        <begin position="1"/>
        <end position="27"/>
    </location>
</feature>
<feature type="chain" id="PRO_0000313605" description="Beta-galactosidase-1-like protein">
    <location>
        <begin position="28"/>
        <end position="654"/>
    </location>
</feature>
<feature type="active site" description="Proton donor" evidence="1">
    <location>
        <position position="186"/>
    </location>
</feature>
<feature type="active site" description="Nucleophile" evidence="1">
    <location>
        <position position="264"/>
    </location>
</feature>
<feature type="glycosylation site" description="N-linked (GlcNAc...) asparagine" evidence="1">
    <location>
        <position position="97"/>
    </location>
</feature>
<feature type="glycosylation site" description="N-linked (GlcNAc...) asparagine" evidence="1">
    <location>
        <position position="243"/>
    </location>
</feature>
<feature type="sequence conflict" description="In Ref. 1; BAB64453." evidence="2" ref="1">
    <original>D</original>
    <variation>N</variation>
    <location>
        <position position="33"/>
    </location>
</feature>
<feature type="sequence conflict" description="In Ref. 1; BAB64453." evidence="2" ref="1">
    <original>T</original>
    <variation>A</variation>
    <location>
        <position position="627"/>
    </location>
</feature>
<reference key="1">
    <citation type="journal article" date="2002" name="BMC Genomics">
        <title>Cynomolgus monkey testicular cDNAs for discovery of novel human genes in the human genome sequence.</title>
        <authorList>
            <person name="Osada N."/>
            <person name="Hida M."/>
            <person name="Kusuda J."/>
            <person name="Tanuma R."/>
            <person name="Hirata M."/>
            <person name="Suto Y."/>
            <person name="Hirai M."/>
            <person name="Terao K."/>
            <person name="Sugano S."/>
            <person name="Hashimoto K."/>
        </authorList>
    </citation>
    <scope>NUCLEOTIDE SEQUENCE [LARGE SCALE MRNA]</scope>
    <source>
        <tissue>Testis</tissue>
    </source>
</reference>
<reference key="2">
    <citation type="submission" date="2001-09" db="EMBL/GenBank/DDBJ databases">
        <title>Isolation of novel full-length cDNA clones from macaque testis cDNA libraries.</title>
        <authorList>
            <person name="Hashimoto K."/>
            <person name="Osada N."/>
            <person name="Hida M."/>
            <person name="Kusuda J."/>
            <person name="Tanuma R."/>
            <person name="Hirai M."/>
            <person name="Terao K."/>
            <person name="Sugano S."/>
        </authorList>
    </citation>
    <scope>NUCLEOTIDE SEQUENCE [LARGE SCALE MRNA]</scope>
    <source>
        <tissue>Testis</tissue>
    </source>
</reference>
<reference key="3">
    <citation type="submission" date="2005-06" db="EMBL/GenBank/DDBJ databases">
        <title>DNA sequences of macaque genes expressed in brain or testis and its evolutionary implications.</title>
        <authorList>
            <consortium name="International consortium for macaque cDNA sequencing and analysis"/>
        </authorList>
    </citation>
    <scope>NUCLEOTIDE SEQUENCE [LARGE SCALE MRNA] OF 106-654</scope>
    <source>
        <tissue>Testis</tissue>
    </source>
</reference>
<gene>
    <name type="primary">GLB1L</name>
    <name type="ORF">QtsA-15875</name>
    <name type="ORF">QtsA-16327</name>
    <name type="ORF">QtsA-17830</name>
</gene>
<evidence type="ECO:0000255" key="1"/>
<evidence type="ECO:0000305" key="2"/>
<dbReference type="EC" id="3.2.1.-"/>
<dbReference type="EMBL" id="AB071060">
    <property type="protein sequence ID" value="BAB64453.1"/>
    <property type="molecule type" value="mRNA"/>
</dbReference>
<dbReference type="EMBL" id="AB071090">
    <property type="protein sequence ID" value="BAB64484.1"/>
    <property type="molecule type" value="mRNA"/>
</dbReference>
<dbReference type="EMBL" id="AB168978">
    <property type="protein sequence ID" value="BAE01075.1"/>
    <property type="status" value="ALT_INIT"/>
    <property type="molecule type" value="mRNA"/>
</dbReference>
<dbReference type="RefSeq" id="NP_001271478.1">
    <property type="nucleotide sequence ID" value="NM_001284549.1"/>
</dbReference>
<dbReference type="RefSeq" id="XP_005574408.1">
    <property type="nucleotide sequence ID" value="XM_005574351.4"/>
</dbReference>
<dbReference type="RefSeq" id="XP_015287616.1">
    <property type="nucleotide sequence ID" value="XM_015432130.1"/>
</dbReference>
<dbReference type="RefSeq" id="XP_065382197.1">
    <property type="nucleotide sequence ID" value="XM_065526125.1"/>
</dbReference>
<dbReference type="SMR" id="Q95LV1"/>
<dbReference type="STRING" id="9541.ENSMFAP00000034869"/>
<dbReference type="CAZy" id="GH35">
    <property type="family name" value="Glycoside Hydrolase Family 35"/>
</dbReference>
<dbReference type="GlyCosmos" id="Q95LV1">
    <property type="glycosylation" value="2 sites, No reported glycans"/>
</dbReference>
<dbReference type="Ensembl" id="ENSMFAT00000009100.2">
    <property type="protein sequence ID" value="ENSMFAP00000034869.1"/>
    <property type="gene ID" value="ENSMFAG00000003895.2"/>
</dbReference>
<dbReference type="GeneID" id="102141964"/>
<dbReference type="CTD" id="79411"/>
<dbReference type="VEuPathDB" id="HostDB:ENSMFAG00000003895"/>
<dbReference type="eggNOG" id="KOG0496">
    <property type="taxonomic scope" value="Eukaryota"/>
</dbReference>
<dbReference type="GeneTree" id="ENSGT00950000182942"/>
<dbReference type="OMA" id="HERQYLH"/>
<dbReference type="Proteomes" id="UP000233100">
    <property type="component" value="Chromosome 12"/>
</dbReference>
<dbReference type="Bgee" id="ENSMFAG00000003895">
    <property type="expression patterns" value="Expressed in liver and 13 other cell types or tissues"/>
</dbReference>
<dbReference type="GO" id="GO:0005576">
    <property type="term" value="C:extracellular region"/>
    <property type="evidence" value="ECO:0007669"/>
    <property type="project" value="UniProtKB-SubCell"/>
</dbReference>
<dbReference type="GO" id="GO:0004565">
    <property type="term" value="F:beta-galactosidase activity"/>
    <property type="evidence" value="ECO:0007669"/>
    <property type="project" value="InterPro"/>
</dbReference>
<dbReference type="GO" id="GO:0005975">
    <property type="term" value="P:carbohydrate metabolic process"/>
    <property type="evidence" value="ECO:0007669"/>
    <property type="project" value="InterPro"/>
</dbReference>
<dbReference type="FunFam" id="2.60.120.260:FF:000021">
    <property type="entry name" value="Beta-galactosidase"/>
    <property type="match status" value="1"/>
</dbReference>
<dbReference type="FunFam" id="3.20.20.80:FF:000017">
    <property type="entry name" value="Beta-galactosidase"/>
    <property type="match status" value="1"/>
</dbReference>
<dbReference type="Gene3D" id="2.60.120.260">
    <property type="entry name" value="Galactose-binding domain-like"/>
    <property type="match status" value="2"/>
</dbReference>
<dbReference type="Gene3D" id="3.20.20.80">
    <property type="entry name" value="Glycosidases"/>
    <property type="match status" value="1"/>
</dbReference>
<dbReference type="InterPro" id="IPR026283">
    <property type="entry name" value="B-gal_1-like"/>
</dbReference>
<dbReference type="InterPro" id="IPR048912">
    <property type="entry name" value="BetaGal1-like_ABD1"/>
</dbReference>
<dbReference type="InterPro" id="IPR048913">
    <property type="entry name" value="BetaGal_gal-bd"/>
</dbReference>
<dbReference type="InterPro" id="IPR008979">
    <property type="entry name" value="Galactose-bd-like_sf"/>
</dbReference>
<dbReference type="InterPro" id="IPR031330">
    <property type="entry name" value="Gly_Hdrlase_35_cat"/>
</dbReference>
<dbReference type="InterPro" id="IPR001944">
    <property type="entry name" value="Glycoside_Hdrlase_35"/>
</dbReference>
<dbReference type="InterPro" id="IPR017853">
    <property type="entry name" value="Glycoside_hydrolase_SF"/>
</dbReference>
<dbReference type="PANTHER" id="PTHR23421">
    <property type="entry name" value="BETA-GALACTOSIDASE RELATED"/>
    <property type="match status" value="1"/>
</dbReference>
<dbReference type="Pfam" id="PF21317">
    <property type="entry name" value="BetaGal_ABD_1"/>
    <property type="match status" value="1"/>
</dbReference>
<dbReference type="Pfam" id="PF21467">
    <property type="entry name" value="BetaGal_gal-bd"/>
    <property type="match status" value="1"/>
</dbReference>
<dbReference type="Pfam" id="PF01301">
    <property type="entry name" value="Glyco_hydro_35"/>
    <property type="match status" value="1"/>
</dbReference>
<dbReference type="PIRSF" id="PIRSF006336">
    <property type="entry name" value="B-gal"/>
    <property type="match status" value="1"/>
</dbReference>
<dbReference type="PRINTS" id="PR00742">
    <property type="entry name" value="GLHYDRLASE35"/>
</dbReference>
<dbReference type="SUPFAM" id="SSF51445">
    <property type="entry name" value="(Trans)glycosidases"/>
    <property type="match status" value="1"/>
</dbReference>
<dbReference type="SUPFAM" id="SSF49785">
    <property type="entry name" value="Galactose-binding domain-like"/>
    <property type="match status" value="1"/>
</dbReference>